<keyword id="KW-0143">Chaperone</keyword>
<keyword id="KW-0963">Cytoplasm</keyword>
<keyword id="KW-0996">Nickel insertion</keyword>
<keyword id="KW-1185">Reference proteome</keyword>
<gene>
    <name evidence="1" type="primary">ureF</name>
    <name type="ordered locus">Dshi_2362</name>
</gene>
<feature type="chain" id="PRO_0000344120" description="Urease accessory protein UreF">
    <location>
        <begin position="1"/>
        <end position="210"/>
    </location>
</feature>
<accession>A8LRR7</accession>
<reference key="1">
    <citation type="journal article" date="2010" name="ISME J.">
        <title>The complete genome sequence of the algal symbiont Dinoroseobacter shibae: a hitchhiker's guide to life in the sea.</title>
        <authorList>
            <person name="Wagner-Dobler I."/>
            <person name="Ballhausen B."/>
            <person name="Berger M."/>
            <person name="Brinkhoff T."/>
            <person name="Buchholz I."/>
            <person name="Bunk B."/>
            <person name="Cypionka H."/>
            <person name="Daniel R."/>
            <person name="Drepper T."/>
            <person name="Gerdts G."/>
            <person name="Hahnke S."/>
            <person name="Han C."/>
            <person name="Jahn D."/>
            <person name="Kalhoefer D."/>
            <person name="Kiss H."/>
            <person name="Klenk H.P."/>
            <person name="Kyrpides N."/>
            <person name="Liebl W."/>
            <person name="Liesegang H."/>
            <person name="Meincke L."/>
            <person name="Pati A."/>
            <person name="Petersen J."/>
            <person name="Piekarski T."/>
            <person name="Pommerenke C."/>
            <person name="Pradella S."/>
            <person name="Pukall R."/>
            <person name="Rabus R."/>
            <person name="Stackebrandt E."/>
            <person name="Thole S."/>
            <person name="Thompson L."/>
            <person name="Tielen P."/>
            <person name="Tomasch J."/>
            <person name="von Jan M."/>
            <person name="Wanphrut N."/>
            <person name="Wichels A."/>
            <person name="Zech H."/>
            <person name="Simon M."/>
        </authorList>
    </citation>
    <scope>NUCLEOTIDE SEQUENCE [LARGE SCALE GENOMIC DNA]</scope>
    <source>
        <strain>DSM 16493 / NCIMB 14021 / DFL 12</strain>
    </source>
</reference>
<proteinExistence type="inferred from homology"/>
<name>UREF_DINSH</name>
<organism>
    <name type="scientific">Dinoroseobacter shibae (strain DSM 16493 / NCIMB 14021 / DFL 12)</name>
    <dbReference type="NCBI Taxonomy" id="398580"/>
    <lineage>
        <taxon>Bacteria</taxon>
        <taxon>Pseudomonadati</taxon>
        <taxon>Pseudomonadota</taxon>
        <taxon>Alphaproteobacteria</taxon>
        <taxon>Rhodobacterales</taxon>
        <taxon>Roseobacteraceae</taxon>
        <taxon>Dinoroseobacter</taxon>
    </lineage>
</organism>
<comment type="function">
    <text evidence="1">Required for maturation of urease via the functional incorporation of the urease nickel metallocenter.</text>
</comment>
<comment type="subunit">
    <text evidence="1">UreD, UreF and UreG form a complex that acts as a GTP-hydrolysis-dependent molecular chaperone, activating the urease apoprotein by helping to assemble the nickel containing metallocenter of UreC. The UreE protein probably delivers the nickel.</text>
</comment>
<comment type="subcellular location">
    <subcellularLocation>
        <location evidence="1">Cytoplasm</location>
    </subcellularLocation>
</comment>
<comment type="similarity">
    <text evidence="1">Belongs to the UreF family.</text>
</comment>
<dbReference type="EMBL" id="CP000830">
    <property type="protein sequence ID" value="ABV94098.1"/>
    <property type="molecule type" value="Genomic_DNA"/>
</dbReference>
<dbReference type="RefSeq" id="WP_012179029.1">
    <property type="nucleotide sequence ID" value="NC_009952.1"/>
</dbReference>
<dbReference type="SMR" id="A8LRR7"/>
<dbReference type="STRING" id="398580.Dshi_2362"/>
<dbReference type="KEGG" id="dsh:Dshi_2362"/>
<dbReference type="eggNOG" id="COG0830">
    <property type="taxonomic scope" value="Bacteria"/>
</dbReference>
<dbReference type="HOGENOM" id="CLU_049215_2_0_5"/>
<dbReference type="OrthoDB" id="9798772at2"/>
<dbReference type="Proteomes" id="UP000006833">
    <property type="component" value="Chromosome"/>
</dbReference>
<dbReference type="GO" id="GO:0005737">
    <property type="term" value="C:cytoplasm"/>
    <property type="evidence" value="ECO:0007669"/>
    <property type="project" value="UniProtKB-SubCell"/>
</dbReference>
<dbReference type="GO" id="GO:0016151">
    <property type="term" value="F:nickel cation binding"/>
    <property type="evidence" value="ECO:0007669"/>
    <property type="project" value="UniProtKB-UniRule"/>
</dbReference>
<dbReference type="Gene3D" id="1.10.4190.10">
    <property type="entry name" value="Urease accessory protein UreF"/>
    <property type="match status" value="1"/>
</dbReference>
<dbReference type="HAMAP" id="MF_01385">
    <property type="entry name" value="UreF"/>
    <property type="match status" value="1"/>
</dbReference>
<dbReference type="InterPro" id="IPR002639">
    <property type="entry name" value="UreF"/>
</dbReference>
<dbReference type="InterPro" id="IPR038277">
    <property type="entry name" value="UreF_sf"/>
</dbReference>
<dbReference type="PANTHER" id="PTHR33620">
    <property type="entry name" value="UREASE ACCESSORY PROTEIN F"/>
    <property type="match status" value="1"/>
</dbReference>
<dbReference type="PANTHER" id="PTHR33620:SF1">
    <property type="entry name" value="UREASE ACCESSORY PROTEIN F"/>
    <property type="match status" value="1"/>
</dbReference>
<dbReference type="Pfam" id="PF01730">
    <property type="entry name" value="UreF"/>
    <property type="match status" value="1"/>
</dbReference>
<dbReference type="PIRSF" id="PIRSF009467">
    <property type="entry name" value="Ureas_acces_UreF"/>
    <property type="match status" value="1"/>
</dbReference>
<sequence length="210" mass="22010">MIAARLRLSQWLSPSFPVSGYAYSHGLEQAISTGDIADAEDLLAWLQALLTSGACQADGVLVARAAAGDPLEPLCEAAEALAGSAERWSETRDQGAAFVSTTNALCDTALRPMPYPVAVGARARALGLPVGEVVALYLQAFLGNLISGAVRLIPLGQTEGQQVSQSLHPTISTQARCLATRPLSEIGTGAVRAELAAMAHETQEVRIFRT</sequence>
<protein>
    <recommendedName>
        <fullName evidence="1">Urease accessory protein UreF</fullName>
    </recommendedName>
</protein>
<evidence type="ECO:0000255" key="1">
    <source>
        <dbReference type="HAMAP-Rule" id="MF_01385"/>
    </source>
</evidence>